<reference key="1">
    <citation type="journal article" date="1995" name="Genomics">
        <title>Surf5: a gene in the tightly clustered mouse surfeit locus is highly conserved and transcribed divergently from the rpL7A (Surf3) gene.</title>
        <authorList>
            <person name="Garson K."/>
            <person name="Duhig T."/>
            <person name="Armes N."/>
            <person name="Colombo P."/>
            <person name="Fried M."/>
        </authorList>
    </citation>
    <scope>NUCLEOTIDE SEQUENCE [GENOMIC DNA]</scope>
    <source>
        <strain>BALB/cJ</strain>
    </source>
</reference>
<reference key="2">
    <citation type="journal article" date="2005" name="Science">
        <title>The transcriptional landscape of the mammalian genome.</title>
        <authorList>
            <person name="Carninci P."/>
            <person name="Kasukawa T."/>
            <person name="Katayama S."/>
            <person name="Gough J."/>
            <person name="Frith M.C."/>
            <person name="Maeda N."/>
            <person name="Oyama R."/>
            <person name="Ravasi T."/>
            <person name="Lenhard B."/>
            <person name="Wells C."/>
            <person name="Kodzius R."/>
            <person name="Shimokawa K."/>
            <person name="Bajic V.B."/>
            <person name="Brenner S.E."/>
            <person name="Batalov S."/>
            <person name="Forrest A.R."/>
            <person name="Zavolan M."/>
            <person name="Davis M.J."/>
            <person name="Wilming L.G."/>
            <person name="Aidinis V."/>
            <person name="Allen J.E."/>
            <person name="Ambesi-Impiombato A."/>
            <person name="Apweiler R."/>
            <person name="Aturaliya R.N."/>
            <person name="Bailey T.L."/>
            <person name="Bansal M."/>
            <person name="Baxter L."/>
            <person name="Beisel K.W."/>
            <person name="Bersano T."/>
            <person name="Bono H."/>
            <person name="Chalk A.M."/>
            <person name="Chiu K.P."/>
            <person name="Choudhary V."/>
            <person name="Christoffels A."/>
            <person name="Clutterbuck D.R."/>
            <person name="Crowe M.L."/>
            <person name="Dalla E."/>
            <person name="Dalrymple B.P."/>
            <person name="de Bono B."/>
            <person name="Della Gatta G."/>
            <person name="di Bernardo D."/>
            <person name="Down T."/>
            <person name="Engstrom P."/>
            <person name="Fagiolini M."/>
            <person name="Faulkner G."/>
            <person name="Fletcher C.F."/>
            <person name="Fukushima T."/>
            <person name="Furuno M."/>
            <person name="Futaki S."/>
            <person name="Gariboldi M."/>
            <person name="Georgii-Hemming P."/>
            <person name="Gingeras T.R."/>
            <person name="Gojobori T."/>
            <person name="Green R.E."/>
            <person name="Gustincich S."/>
            <person name="Harbers M."/>
            <person name="Hayashi Y."/>
            <person name="Hensch T.K."/>
            <person name="Hirokawa N."/>
            <person name="Hill D."/>
            <person name="Huminiecki L."/>
            <person name="Iacono M."/>
            <person name="Ikeo K."/>
            <person name="Iwama A."/>
            <person name="Ishikawa T."/>
            <person name="Jakt M."/>
            <person name="Kanapin A."/>
            <person name="Katoh M."/>
            <person name="Kawasawa Y."/>
            <person name="Kelso J."/>
            <person name="Kitamura H."/>
            <person name="Kitano H."/>
            <person name="Kollias G."/>
            <person name="Krishnan S.P."/>
            <person name="Kruger A."/>
            <person name="Kummerfeld S.K."/>
            <person name="Kurochkin I.V."/>
            <person name="Lareau L.F."/>
            <person name="Lazarevic D."/>
            <person name="Lipovich L."/>
            <person name="Liu J."/>
            <person name="Liuni S."/>
            <person name="McWilliam S."/>
            <person name="Madan Babu M."/>
            <person name="Madera M."/>
            <person name="Marchionni L."/>
            <person name="Matsuda H."/>
            <person name="Matsuzawa S."/>
            <person name="Miki H."/>
            <person name="Mignone F."/>
            <person name="Miyake S."/>
            <person name="Morris K."/>
            <person name="Mottagui-Tabar S."/>
            <person name="Mulder N."/>
            <person name="Nakano N."/>
            <person name="Nakauchi H."/>
            <person name="Ng P."/>
            <person name="Nilsson R."/>
            <person name="Nishiguchi S."/>
            <person name="Nishikawa S."/>
            <person name="Nori F."/>
            <person name="Ohara O."/>
            <person name="Okazaki Y."/>
            <person name="Orlando V."/>
            <person name="Pang K.C."/>
            <person name="Pavan W.J."/>
            <person name="Pavesi G."/>
            <person name="Pesole G."/>
            <person name="Petrovsky N."/>
            <person name="Piazza S."/>
            <person name="Reed J."/>
            <person name="Reid J.F."/>
            <person name="Ring B.Z."/>
            <person name="Ringwald M."/>
            <person name="Rost B."/>
            <person name="Ruan Y."/>
            <person name="Salzberg S.L."/>
            <person name="Sandelin A."/>
            <person name="Schneider C."/>
            <person name="Schoenbach C."/>
            <person name="Sekiguchi K."/>
            <person name="Semple C.A."/>
            <person name="Seno S."/>
            <person name="Sessa L."/>
            <person name="Sheng Y."/>
            <person name="Shibata Y."/>
            <person name="Shimada H."/>
            <person name="Shimada K."/>
            <person name="Silva D."/>
            <person name="Sinclair B."/>
            <person name="Sperling S."/>
            <person name="Stupka E."/>
            <person name="Sugiura K."/>
            <person name="Sultana R."/>
            <person name="Takenaka Y."/>
            <person name="Taki K."/>
            <person name="Tammoja K."/>
            <person name="Tan S.L."/>
            <person name="Tang S."/>
            <person name="Taylor M.S."/>
            <person name="Tegner J."/>
            <person name="Teichmann S.A."/>
            <person name="Ueda H.R."/>
            <person name="van Nimwegen E."/>
            <person name="Verardo R."/>
            <person name="Wei C.L."/>
            <person name="Yagi K."/>
            <person name="Yamanishi H."/>
            <person name="Zabarovsky E."/>
            <person name="Zhu S."/>
            <person name="Zimmer A."/>
            <person name="Hide W."/>
            <person name="Bult C."/>
            <person name="Grimmond S.M."/>
            <person name="Teasdale R.D."/>
            <person name="Liu E.T."/>
            <person name="Brusic V."/>
            <person name="Quackenbush J."/>
            <person name="Wahlestedt C."/>
            <person name="Mattick J.S."/>
            <person name="Hume D.A."/>
            <person name="Kai C."/>
            <person name="Sasaki D."/>
            <person name="Tomaru Y."/>
            <person name="Fukuda S."/>
            <person name="Kanamori-Katayama M."/>
            <person name="Suzuki M."/>
            <person name="Aoki J."/>
            <person name="Arakawa T."/>
            <person name="Iida J."/>
            <person name="Imamura K."/>
            <person name="Itoh M."/>
            <person name="Kato T."/>
            <person name="Kawaji H."/>
            <person name="Kawagashira N."/>
            <person name="Kawashima T."/>
            <person name="Kojima M."/>
            <person name="Kondo S."/>
            <person name="Konno H."/>
            <person name="Nakano K."/>
            <person name="Ninomiya N."/>
            <person name="Nishio T."/>
            <person name="Okada M."/>
            <person name="Plessy C."/>
            <person name="Shibata K."/>
            <person name="Shiraki T."/>
            <person name="Suzuki S."/>
            <person name="Tagami M."/>
            <person name="Waki K."/>
            <person name="Watahiki A."/>
            <person name="Okamura-Oho Y."/>
            <person name="Suzuki H."/>
            <person name="Kawai J."/>
            <person name="Hayashizaki Y."/>
        </authorList>
    </citation>
    <scope>NUCLEOTIDE SEQUENCE [LARGE SCALE MRNA] (ISOFORM 2)</scope>
    <source>
        <strain>C57BL/6J</strain>
        <tissue>Lung</tissue>
        <tissue>Mammary gland</tissue>
        <tissue>Skin</tissue>
    </source>
</reference>
<reference key="3">
    <citation type="journal article" date="2009" name="PLoS Biol.">
        <title>Lineage-specific biology revealed by a finished genome assembly of the mouse.</title>
        <authorList>
            <person name="Church D.M."/>
            <person name="Goodstadt L."/>
            <person name="Hillier L.W."/>
            <person name="Zody M.C."/>
            <person name="Goldstein S."/>
            <person name="She X."/>
            <person name="Bult C.J."/>
            <person name="Agarwala R."/>
            <person name="Cherry J.L."/>
            <person name="DiCuccio M."/>
            <person name="Hlavina W."/>
            <person name="Kapustin Y."/>
            <person name="Meric P."/>
            <person name="Maglott D."/>
            <person name="Birtle Z."/>
            <person name="Marques A.C."/>
            <person name="Graves T."/>
            <person name="Zhou S."/>
            <person name="Teague B."/>
            <person name="Potamousis K."/>
            <person name="Churas C."/>
            <person name="Place M."/>
            <person name="Herschleb J."/>
            <person name="Runnheim R."/>
            <person name="Forrest D."/>
            <person name="Amos-Landgraf J."/>
            <person name="Schwartz D.C."/>
            <person name="Cheng Z."/>
            <person name="Lindblad-Toh K."/>
            <person name="Eichler E.E."/>
            <person name="Ponting C.P."/>
        </authorList>
    </citation>
    <scope>NUCLEOTIDE SEQUENCE [LARGE SCALE GENOMIC DNA]</scope>
    <source>
        <strain>C57BL/6J</strain>
    </source>
</reference>
<reference key="4">
    <citation type="journal article" date="2004" name="Genome Res.">
        <title>The status, quality, and expansion of the NIH full-length cDNA project: the Mammalian Gene Collection (MGC).</title>
        <authorList>
            <consortium name="The MGC Project Team"/>
        </authorList>
    </citation>
    <scope>NUCLEOTIDE SEQUENCE [LARGE SCALE MRNA] (ISOFORM 2)</scope>
    <source>
        <strain>FVB/N</strain>
        <tissue>Mammary gland</tissue>
    </source>
</reference>
<reference key="5">
    <citation type="journal article" date="2010" name="Cell">
        <title>A tissue-specific atlas of mouse protein phosphorylation and expression.</title>
        <authorList>
            <person name="Huttlin E.L."/>
            <person name="Jedrychowski M.P."/>
            <person name="Elias J.E."/>
            <person name="Goswami T."/>
            <person name="Rad R."/>
            <person name="Beausoleil S.A."/>
            <person name="Villen J."/>
            <person name="Haas W."/>
            <person name="Sowa M.E."/>
            <person name="Gygi S.P."/>
        </authorList>
    </citation>
    <scope>IDENTIFICATION BY MASS SPECTROMETRY [LARGE SCALE ANALYSIS]</scope>
    <source>
        <tissue>Testis</tissue>
    </source>
</reference>
<gene>
    <name type="primary">Med22</name>
    <name type="synonym">Surf5</name>
</gene>
<keyword id="KW-0002">3D-structure</keyword>
<keyword id="KW-0010">Activator</keyword>
<keyword id="KW-0025">Alternative splicing</keyword>
<keyword id="KW-0175">Coiled coil</keyword>
<keyword id="KW-0539">Nucleus</keyword>
<keyword id="KW-1185">Reference proteome</keyword>
<keyword id="KW-0804">Transcription</keyword>
<keyword id="KW-0805">Transcription regulation</keyword>
<organism>
    <name type="scientific">Mus musculus</name>
    <name type="common">Mouse</name>
    <dbReference type="NCBI Taxonomy" id="10090"/>
    <lineage>
        <taxon>Eukaryota</taxon>
        <taxon>Metazoa</taxon>
        <taxon>Chordata</taxon>
        <taxon>Craniata</taxon>
        <taxon>Vertebrata</taxon>
        <taxon>Euteleostomi</taxon>
        <taxon>Mammalia</taxon>
        <taxon>Eutheria</taxon>
        <taxon>Euarchontoglires</taxon>
        <taxon>Glires</taxon>
        <taxon>Rodentia</taxon>
        <taxon>Myomorpha</taxon>
        <taxon>Muroidea</taxon>
        <taxon>Muridae</taxon>
        <taxon>Murinae</taxon>
        <taxon>Mus</taxon>
        <taxon>Mus</taxon>
    </lineage>
</organism>
<feature type="chain" id="PRO_0000178839" description="Mediator of RNA polymerase II transcription subunit 22">
    <location>
        <begin position="1"/>
        <end position="200"/>
    </location>
</feature>
<feature type="region of interest" description="Disordered" evidence="3">
    <location>
        <begin position="169"/>
        <end position="200"/>
    </location>
</feature>
<feature type="coiled-coil region" evidence="2">
    <location>
        <begin position="93"/>
        <end position="122"/>
    </location>
</feature>
<feature type="compositionally biased region" description="Gly residues" evidence="3">
    <location>
        <begin position="190"/>
        <end position="200"/>
    </location>
</feature>
<feature type="splice variant" id="VSP_028993" description="In isoform 2." evidence="4 5">
    <original>SSS</original>
    <variation>RYK</variation>
    <location>
        <begin position="138"/>
        <end position="140"/>
    </location>
</feature>
<feature type="splice variant" id="VSP_028994" description="In isoform 2." evidence="4 5">
    <location>
        <begin position="141"/>
        <end position="200"/>
    </location>
</feature>
<evidence type="ECO:0000250" key="1"/>
<evidence type="ECO:0000255" key="2"/>
<evidence type="ECO:0000256" key="3">
    <source>
        <dbReference type="SAM" id="MobiDB-lite"/>
    </source>
</evidence>
<evidence type="ECO:0000303" key="4">
    <source>
    </source>
</evidence>
<evidence type="ECO:0000303" key="5">
    <source>
    </source>
</evidence>
<evidence type="ECO:0000305" key="6"/>
<dbReference type="EMBL" id="X85169">
    <property type="protein sequence ID" value="CAA59453.1"/>
    <property type="molecule type" value="Genomic_DNA"/>
</dbReference>
<dbReference type="EMBL" id="AK144744">
    <property type="protein sequence ID" value="BAE26044.1"/>
    <property type="molecule type" value="mRNA"/>
</dbReference>
<dbReference type="EMBL" id="AK161053">
    <property type="protein sequence ID" value="BAE36173.1"/>
    <property type="molecule type" value="mRNA"/>
</dbReference>
<dbReference type="EMBL" id="AK166250">
    <property type="protein sequence ID" value="BAE38661.1"/>
    <property type="molecule type" value="mRNA"/>
</dbReference>
<dbReference type="EMBL" id="AK166474">
    <property type="protein sequence ID" value="BAE38795.1"/>
    <property type="molecule type" value="mRNA"/>
</dbReference>
<dbReference type="EMBL" id="AL773563">
    <property type="status" value="NOT_ANNOTATED_CDS"/>
    <property type="molecule type" value="Genomic_DNA"/>
</dbReference>
<dbReference type="EMBL" id="BC018225">
    <property type="protein sequence ID" value="AAH18225.1"/>
    <property type="molecule type" value="mRNA"/>
</dbReference>
<dbReference type="CCDS" id="CCDS15813.1">
    <molecule id="Q62276-1"/>
</dbReference>
<dbReference type="CCDS" id="CCDS15814.1">
    <molecule id="Q62276-2"/>
</dbReference>
<dbReference type="RefSeq" id="NP_001029080.1">
    <molecule id="Q62276-1"/>
    <property type="nucleotide sequence ID" value="NM_001033908.1"/>
</dbReference>
<dbReference type="RefSeq" id="NP_035643.1">
    <molecule id="Q62276-2"/>
    <property type="nucleotide sequence ID" value="NM_011513.2"/>
</dbReference>
<dbReference type="PDB" id="6W1S">
    <property type="method" value="EM"/>
    <property type="resolution" value="4.02 A"/>
    <property type="chains" value="Q=9-139"/>
</dbReference>
<dbReference type="PDB" id="8T1I">
    <property type="method" value="EM"/>
    <property type="resolution" value="4.68 A"/>
    <property type="chains" value="Q=1-200"/>
</dbReference>
<dbReference type="PDB" id="8T1L">
    <property type="method" value="EM"/>
    <property type="resolution" value="4.83 A"/>
    <property type="chains" value="Q=1-200"/>
</dbReference>
<dbReference type="PDBsum" id="6W1S"/>
<dbReference type="PDBsum" id="8T1I"/>
<dbReference type="PDBsum" id="8T1L"/>
<dbReference type="EMDB" id="EMD-21514"/>
<dbReference type="EMDB" id="EMD-40968"/>
<dbReference type="EMDB" id="EMD-40971"/>
<dbReference type="SMR" id="Q62276"/>
<dbReference type="BioGRID" id="203582">
    <property type="interactions" value="34"/>
</dbReference>
<dbReference type="ComplexPortal" id="CPX-3264">
    <property type="entry name" value="Core mediator complex"/>
</dbReference>
<dbReference type="FunCoup" id="Q62276">
    <property type="interactions" value="3253"/>
</dbReference>
<dbReference type="IntAct" id="Q62276">
    <property type="interactions" value="33"/>
</dbReference>
<dbReference type="STRING" id="10090.ENSMUSP00000015920"/>
<dbReference type="GlyGen" id="Q62276">
    <property type="glycosylation" value="1 site"/>
</dbReference>
<dbReference type="iPTMnet" id="Q62276"/>
<dbReference type="PhosphoSitePlus" id="Q62276"/>
<dbReference type="PaxDb" id="10090-ENSMUSP00000015920"/>
<dbReference type="ProteomicsDB" id="295862">
    <molecule id="Q62276-1"/>
</dbReference>
<dbReference type="ProteomicsDB" id="295863">
    <molecule id="Q62276-2"/>
</dbReference>
<dbReference type="Pumba" id="Q62276"/>
<dbReference type="Antibodypedia" id="18330">
    <property type="antibodies" value="181 antibodies from 27 providers"/>
</dbReference>
<dbReference type="DNASU" id="20933"/>
<dbReference type="Ensembl" id="ENSMUST00000015920.12">
    <molecule id="Q62276-1"/>
    <property type="protein sequence ID" value="ENSMUSP00000015920.6"/>
    <property type="gene ID" value="ENSMUSG00000015776.13"/>
</dbReference>
<dbReference type="Ensembl" id="ENSMUST00000102899.10">
    <molecule id="Q62276-2"/>
    <property type="protein sequence ID" value="ENSMUSP00000099963.4"/>
    <property type="gene ID" value="ENSMUSG00000015776.13"/>
</dbReference>
<dbReference type="GeneID" id="20933"/>
<dbReference type="KEGG" id="mmu:20933"/>
<dbReference type="UCSC" id="uc008iwd.1">
    <molecule id="Q62276-1"/>
    <property type="organism name" value="mouse"/>
</dbReference>
<dbReference type="UCSC" id="uc008iwe.1">
    <molecule id="Q62276-2"/>
    <property type="organism name" value="mouse"/>
</dbReference>
<dbReference type="AGR" id="MGI:98446"/>
<dbReference type="CTD" id="6837"/>
<dbReference type="MGI" id="MGI:98446">
    <property type="gene designation" value="Med22"/>
</dbReference>
<dbReference type="VEuPathDB" id="HostDB:ENSMUSG00000015776"/>
<dbReference type="eggNOG" id="KOG3304">
    <property type="taxonomic scope" value="Eukaryota"/>
</dbReference>
<dbReference type="GeneTree" id="ENSGT00390000004339"/>
<dbReference type="HOGENOM" id="CLU_117242_0_0_1"/>
<dbReference type="InParanoid" id="Q62276"/>
<dbReference type="OMA" id="KQAECDQ"/>
<dbReference type="OrthoDB" id="203279at2759"/>
<dbReference type="PhylomeDB" id="Q62276"/>
<dbReference type="TreeFam" id="TF323390"/>
<dbReference type="BioGRID-ORCS" id="20933">
    <property type="hits" value="22 hits in 78 CRISPR screens"/>
</dbReference>
<dbReference type="ChiTaRS" id="Med22">
    <property type="organism name" value="mouse"/>
</dbReference>
<dbReference type="PRO" id="PR:Q62276"/>
<dbReference type="Proteomes" id="UP000000589">
    <property type="component" value="Chromosome 2"/>
</dbReference>
<dbReference type="RNAct" id="Q62276">
    <property type="molecule type" value="protein"/>
</dbReference>
<dbReference type="Bgee" id="ENSMUSG00000015776">
    <property type="expression patterns" value="Expressed in embryonic brain and 257 other cell types or tissues"/>
</dbReference>
<dbReference type="ExpressionAtlas" id="Q62276">
    <property type="expression patterns" value="baseline and differential"/>
</dbReference>
<dbReference type="GO" id="GO:0070847">
    <property type="term" value="C:core mediator complex"/>
    <property type="evidence" value="ECO:0000266"/>
    <property type="project" value="ComplexPortal"/>
</dbReference>
<dbReference type="GO" id="GO:0016592">
    <property type="term" value="C:mediator complex"/>
    <property type="evidence" value="ECO:0000266"/>
    <property type="project" value="MGI"/>
</dbReference>
<dbReference type="GO" id="GO:0005654">
    <property type="term" value="C:nucleoplasm"/>
    <property type="evidence" value="ECO:0000304"/>
    <property type="project" value="Reactome"/>
</dbReference>
<dbReference type="GO" id="GO:0005634">
    <property type="term" value="C:nucleus"/>
    <property type="evidence" value="ECO:0000266"/>
    <property type="project" value="ComplexPortal"/>
</dbReference>
<dbReference type="GO" id="GO:0003712">
    <property type="term" value="F:transcription coregulator activity"/>
    <property type="evidence" value="ECO:0007669"/>
    <property type="project" value="InterPro"/>
</dbReference>
<dbReference type="GO" id="GO:0032968">
    <property type="term" value="P:positive regulation of transcription elongation by RNA polymerase II"/>
    <property type="evidence" value="ECO:0000303"/>
    <property type="project" value="ComplexPortal"/>
</dbReference>
<dbReference type="GO" id="GO:0060261">
    <property type="term" value="P:positive regulation of transcription initiation by RNA polymerase II"/>
    <property type="evidence" value="ECO:0000303"/>
    <property type="project" value="ComplexPortal"/>
</dbReference>
<dbReference type="GO" id="GO:0051123">
    <property type="term" value="P:RNA polymerase II preinitiation complex assembly"/>
    <property type="evidence" value="ECO:0000303"/>
    <property type="project" value="ComplexPortal"/>
</dbReference>
<dbReference type="InterPro" id="IPR009332">
    <property type="entry name" value="Med22"/>
</dbReference>
<dbReference type="PANTHER" id="PTHR12434">
    <property type="entry name" value="MEDIATOR OF RNA POLYMERASE II TRANSCRIPTION SUBUNIT 22"/>
    <property type="match status" value="1"/>
</dbReference>
<dbReference type="PANTHER" id="PTHR12434:SF6">
    <property type="entry name" value="MEDIATOR OF RNA POLYMERASE II TRANSCRIPTION SUBUNIT 22"/>
    <property type="match status" value="1"/>
</dbReference>
<dbReference type="Pfam" id="PF06179">
    <property type="entry name" value="Med22"/>
    <property type="match status" value="1"/>
</dbReference>
<proteinExistence type="evidence at protein level"/>
<sequence>MAQQRALPQSKETLLQSYNKRLKDDIKSIMDNFTEIIKTAKIEDETQVSRATQGEQDNYEMHVRAANIVRAGESLMKLVSDLKQFLILNDFPSVNEAIDQRNQQLRALQEECDRKLITLRDEVSIDLYELEEEYYSSSSSLCEANDLPLCEAYWRLDLDADSADGLSAPLLASPETGAGPLQSAAPVHSHGGGPGPTEHT</sequence>
<accession>Q62276</accession>
<accession>A2ALA2</accession>
<accession>Q3TTZ9</accession>
<comment type="function">
    <text evidence="1">Component of the Mediator complex, a coactivator involved in the regulated transcription of nearly all RNA polymerase II-dependent genes. Mediator functions as a bridge to convey information from gene-specific regulatory proteins to the basal RNA polymerase II transcription machinery. Mediator is recruited to promoters by direct interactions with regulatory proteins and serves as a scaffold for the assembly of a functional preinitiation complex with RNA polymerase II and the general transcription factors (By similarity).</text>
</comment>
<comment type="subunit">
    <text evidence="1">Component of the Mediator complex, which is composed of MED1, MED4, MED6, MED7, MED8, MED9, MED10, MED11, MED12, MED13, MED13L, MED14, MED15, MED16, MED17, MED18, MED19, MED20, MED21, MED22, MED23, MED24, MED25, MED26, MED27, MED29, MED30, MED31, CCNC, CDK8 and CDC2L6/CDK11. The MED12, MED13, CCNC and CDK8 subunits form a distinct module termed the CDK8 module. Mediator containing the CDK8 module is less active than Mediator lacking this module in supporting transcriptional activation. Individual preparations of the Mediator complex lacking one or more distinct subunits have been variously termed ARC, CRSP, DRIP, PC2, SMCC and TRAP (By similarity).</text>
</comment>
<comment type="subcellular location">
    <subcellularLocation>
        <location evidence="6">Nucleus</location>
    </subcellularLocation>
</comment>
<comment type="alternative products">
    <event type="alternative splicing"/>
    <isoform>
        <id>Q62276-1</id>
        <name>1</name>
        <name>Surf5B</name>
        <sequence type="displayed"/>
    </isoform>
    <isoform>
        <id>Q62276-2</id>
        <name>2</name>
        <name>Surf5A</name>
        <sequence type="described" ref="VSP_028993 VSP_028994"/>
    </isoform>
</comment>
<comment type="similarity">
    <text evidence="6">Belongs to the Mediator complex subunit 22 family.</text>
</comment>
<name>MED22_MOUSE</name>
<protein>
    <recommendedName>
        <fullName>Mediator of RNA polymerase II transcription subunit 22</fullName>
    </recommendedName>
    <alternativeName>
        <fullName>Mediator complex subunit 22</fullName>
    </alternativeName>
    <alternativeName>
        <fullName>Surfeit locus protein 5</fullName>
        <shortName>Surf-5</shortName>
    </alternativeName>
</protein>